<protein>
    <recommendedName>
        <fullName evidence="1">DNA-directed RNA polymerase subunit Rpo11</fullName>
        <ecNumber evidence="1">2.7.7.6</ecNumber>
    </recommendedName>
    <alternativeName>
        <fullName evidence="1">DNA-directed RNA polymerase subunit L</fullName>
    </alternativeName>
</protein>
<proteinExistence type="inferred from homology"/>
<organism>
    <name type="scientific">Saccharolobus islandicus (strain M.16.4 / Kamchatka #3)</name>
    <name type="common">Sulfolobus islandicus</name>
    <dbReference type="NCBI Taxonomy" id="426118"/>
    <lineage>
        <taxon>Archaea</taxon>
        <taxon>Thermoproteota</taxon>
        <taxon>Thermoprotei</taxon>
        <taxon>Sulfolobales</taxon>
        <taxon>Sulfolobaceae</taxon>
        <taxon>Saccharolobus</taxon>
    </lineage>
</organism>
<name>RPO11_SACI6</name>
<comment type="function">
    <text evidence="1">DNA-dependent RNA polymerase (RNAP) catalyzes the transcription of DNA into RNA using the four ribonucleoside triphosphates as substrates.</text>
</comment>
<comment type="catalytic activity">
    <reaction evidence="1">
        <text>RNA(n) + a ribonucleoside 5'-triphosphate = RNA(n+1) + diphosphate</text>
        <dbReference type="Rhea" id="RHEA:21248"/>
        <dbReference type="Rhea" id="RHEA-COMP:14527"/>
        <dbReference type="Rhea" id="RHEA-COMP:17342"/>
        <dbReference type="ChEBI" id="CHEBI:33019"/>
        <dbReference type="ChEBI" id="CHEBI:61557"/>
        <dbReference type="ChEBI" id="CHEBI:140395"/>
        <dbReference type="EC" id="2.7.7.6"/>
    </reaction>
</comment>
<comment type="subunit">
    <text evidence="1">Part of the RNA polymerase complex.</text>
</comment>
<comment type="subcellular location">
    <subcellularLocation>
        <location evidence="1">Cytoplasm</location>
    </subcellularLocation>
</comment>
<comment type="similarity">
    <text evidence="1">Belongs to the archaeal Rpo11/eukaryotic RPB11/RPC19 RNA polymerase subunit family.</text>
</comment>
<accession>C4KIP6</accession>
<keyword id="KW-0963">Cytoplasm</keyword>
<keyword id="KW-0240">DNA-directed RNA polymerase</keyword>
<keyword id="KW-0548">Nucleotidyltransferase</keyword>
<keyword id="KW-0804">Transcription</keyword>
<keyword id="KW-0808">Transferase</keyword>
<reference key="1">
    <citation type="journal article" date="2009" name="Proc. Natl. Acad. Sci. U.S.A.">
        <title>Biogeography of the Sulfolobus islandicus pan-genome.</title>
        <authorList>
            <person name="Reno M.L."/>
            <person name="Held N.L."/>
            <person name="Fields C.J."/>
            <person name="Burke P.V."/>
            <person name="Whitaker R.J."/>
        </authorList>
    </citation>
    <scope>NUCLEOTIDE SEQUENCE [LARGE SCALE GENOMIC DNA]</scope>
    <source>
        <strain>M.16.4 / Kamchatka #3</strain>
    </source>
</reference>
<feature type="chain" id="PRO_1000204669" description="DNA-directed RNA polymerase subunit Rpo11">
    <location>
        <begin position="1"/>
        <end position="92"/>
    </location>
</feature>
<dbReference type="EC" id="2.7.7.6" evidence="1"/>
<dbReference type="EMBL" id="CP001402">
    <property type="protein sequence ID" value="ACR42460.1"/>
    <property type="molecule type" value="Genomic_DNA"/>
</dbReference>
<dbReference type="RefSeq" id="WP_012711784.1">
    <property type="nucleotide sequence ID" value="NC_012726.1"/>
</dbReference>
<dbReference type="SMR" id="C4KIP6"/>
<dbReference type="KEGG" id="sid:M164_1857"/>
<dbReference type="HOGENOM" id="CLU_090381_5_1_2"/>
<dbReference type="Proteomes" id="UP000001479">
    <property type="component" value="Chromosome"/>
</dbReference>
<dbReference type="GO" id="GO:0005737">
    <property type="term" value="C:cytoplasm"/>
    <property type="evidence" value="ECO:0007669"/>
    <property type="project" value="UniProtKB-SubCell"/>
</dbReference>
<dbReference type="GO" id="GO:0000428">
    <property type="term" value="C:DNA-directed RNA polymerase complex"/>
    <property type="evidence" value="ECO:0007669"/>
    <property type="project" value="UniProtKB-KW"/>
</dbReference>
<dbReference type="GO" id="GO:0003677">
    <property type="term" value="F:DNA binding"/>
    <property type="evidence" value="ECO:0007669"/>
    <property type="project" value="InterPro"/>
</dbReference>
<dbReference type="GO" id="GO:0003899">
    <property type="term" value="F:DNA-directed RNA polymerase activity"/>
    <property type="evidence" value="ECO:0007669"/>
    <property type="project" value="UniProtKB-UniRule"/>
</dbReference>
<dbReference type="GO" id="GO:0046983">
    <property type="term" value="F:protein dimerization activity"/>
    <property type="evidence" value="ECO:0007669"/>
    <property type="project" value="InterPro"/>
</dbReference>
<dbReference type="GO" id="GO:0006351">
    <property type="term" value="P:DNA-templated transcription"/>
    <property type="evidence" value="ECO:0007669"/>
    <property type="project" value="UniProtKB-UniRule"/>
</dbReference>
<dbReference type="Gene3D" id="3.30.1360.10">
    <property type="entry name" value="RNA polymerase, RBP11-like subunit"/>
    <property type="match status" value="1"/>
</dbReference>
<dbReference type="HAMAP" id="MF_00261">
    <property type="entry name" value="RNApol_arch_Rpo11"/>
    <property type="match status" value="1"/>
</dbReference>
<dbReference type="InterPro" id="IPR036603">
    <property type="entry name" value="RBP11-like"/>
</dbReference>
<dbReference type="InterPro" id="IPR009025">
    <property type="entry name" value="RBP11-like_dimer"/>
</dbReference>
<dbReference type="InterPro" id="IPR008193">
    <property type="entry name" value="RNA_pol_Rpb11_13-16kDa_CS"/>
</dbReference>
<dbReference type="InterPro" id="IPR022905">
    <property type="entry name" value="Rpo11-like"/>
</dbReference>
<dbReference type="NCBIfam" id="NF002233">
    <property type="entry name" value="PRK01146.1-1"/>
    <property type="match status" value="1"/>
</dbReference>
<dbReference type="PANTHER" id="PTHR13946">
    <property type="entry name" value="DNA-DIRECTED RNA POLYMERASE I,II,III"/>
    <property type="match status" value="1"/>
</dbReference>
<dbReference type="PANTHER" id="PTHR13946:SF28">
    <property type="entry name" value="DNA-DIRECTED RNA POLYMERASES I AND III SUBUNIT RPAC2"/>
    <property type="match status" value="1"/>
</dbReference>
<dbReference type="Pfam" id="PF13656">
    <property type="entry name" value="RNA_pol_L_2"/>
    <property type="match status" value="1"/>
</dbReference>
<dbReference type="SUPFAM" id="SSF55257">
    <property type="entry name" value="RBP11-like subunits of RNA polymerase"/>
    <property type="match status" value="1"/>
</dbReference>
<dbReference type="PROSITE" id="PS01154">
    <property type="entry name" value="RNA_POL_L_13KD"/>
    <property type="match status" value="1"/>
</dbReference>
<evidence type="ECO:0000255" key="1">
    <source>
        <dbReference type="HAMAP-Rule" id="MF_00261"/>
    </source>
</evidence>
<gene>
    <name evidence="1" type="primary">rpo11</name>
    <name evidence="1" type="synonym">rpoL</name>
    <name type="ordered locus">M164_1857</name>
</gene>
<sequence>MEIKILKSERNYLELEIEGEDHTLGNLIAGTLRKISGVSFASYYQPHPLTDKIIVKILTDGSIAPKDALLKAIETVRVMASHYIDEIKGLSK</sequence>